<evidence type="ECO:0000255" key="1">
    <source>
        <dbReference type="HAMAP-Rule" id="MF_00303"/>
    </source>
</evidence>
<evidence type="ECO:0000256" key="2">
    <source>
        <dbReference type="SAM" id="MobiDB-lite"/>
    </source>
</evidence>
<name>TIG_PROM5</name>
<dbReference type="EC" id="5.2.1.8" evidence="1"/>
<dbReference type="EMBL" id="CP000552">
    <property type="protein sequence ID" value="ABM73052.1"/>
    <property type="molecule type" value="Genomic_DNA"/>
</dbReference>
<dbReference type="RefSeq" id="WP_011821137.1">
    <property type="nucleotide sequence ID" value="NC_008817.1"/>
</dbReference>
<dbReference type="SMR" id="A2BZ41"/>
<dbReference type="STRING" id="167542.P9515_18451"/>
<dbReference type="GeneID" id="60201320"/>
<dbReference type="KEGG" id="pmc:P9515_18451"/>
<dbReference type="eggNOG" id="COG0544">
    <property type="taxonomic scope" value="Bacteria"/>
</dbReference>
<dbReference type="HOGENOM" id="CLU_033058_3_1_3"/>
<dbReference type="OrthoDB" id="9767721at2"/>
<dbReference type="Proteomes" id="UP000001589">
    <property type="component" value="Chromosome"/>
</dbReference>
<dbReference type="GO" id="GO:0005737">
    <property type="term" value="C:cytoplasm"/>
    <property type="evidence" value="ECO:0007669"/>
    <property type="project" value="UniProtKB-SubCell"/>
</dbReference>
<dbReference type="GO" id="GO:0003755">
    <property type="term" value="F:peptidyl-prolyl cis-trans isomerase activity"/>
    <property type="evidence" value="ECO:0007669"/>
    <property type="project" value="UniProtKB-UniRule"/>
</dbReference>
<dbReference type="GO" id="GO:0044183">
    <property type="term" value="F:protein folding chaperone"/>
    <property type="evidence" value="ECO:0007669"/>
    <property type="project" value="TreeGrafter"/>
</dbReference>
<dbReference type="GO" id="GO:0043022">
    <property type="term" value="F:ribosome binding"/>
    <property type="evidence" value="ECO:0007669"/>
    <property type="project" value="TreeGrafter"/>
</dbReference>
<dbReference type="GO" id="GO:0051083">
    <property type="term" value="P:'de novo' cotranslational protein folding"/>
    <property type="evidence" value="ECO:0007669"/>
    <property type="project" value="TreeGrafter"/>
</dbReference>
<dbReference type="GO" id="GO:0051301">
    <property type="term" value="P:cell division"/>
    <property type="evidence" value="ECO:0007669"/>
    <property type="project" value="UniProtKB-KW"/>
</dbReference>
<dbReference type="GO" id="GO:0061077">
    <property type="term" value="P:chaperone-mediated protein folding"/>
    <property type="evidence" value="ECO:0007669"/>
    <property type="project" value="TreeGrafter"/>
</dbReference>
<dbReference type="GO" id="GO:0015031">
    <property type="term" value="P:protein transport"/>
    <property type="evidence" value="ECO:0007669"/>
    <property type="project" value="UniProtKB-UniRule"/>
</dbReference>
<dbReference type="GO" id="GO:0043335">
    <property type="term" value="P:protein unfolding"/>
    <property type="evidence" value="ECO:0007669"/>
    <property type="project" value="TreeGrafter"/>
</dbReference>
<dbReference type="FunFam" id="3.10.50.40:FF:000001">
    <property type="entry name" value="Trigger factor"/>
    <property type="match status" value="1"/>
</dbReference>
<dbReference type="FunFam" id="3.30.70.1050:FF:000004">
    <property type="entry name" value="Trigger factor"/>
    <property type="match status" value="1"/>
</dbReference>
<dbReference type="Gene3D" id="3.10.50.40">
    <property type="match status" value="1"/>
</dbReference>
<dbReference type="Gene3D" id="3.30.70.1050">
    <property type="entry name" value="Trigger factor ribosome-binding domain"/>
    <property type="match status" value="1"/>
</dbReference>
<dbReference type="Gene3D" id="1.10.3120.10">
    <property type="entry name" value="Trigger factor, C-terminal domain"/>
    <property type="match status" value="1"/>
</dbReference>
<dbReference type="HAMAP" id="MF_00303">
    <property type="entry name" value="Trigger_factor_Tig"/>
    <property type="match status" value="1"/>
</dbReference>
<dbReference type="InterPro" id="IPR046357">
    <property type="entry name" value="PPIase_dom_sf"/>
</dbReference>
<dbReference type="InterPro" id="IPR001179">
    <property type="entry name" value="PPIase_FKBP_dom"/>
</dbReference>
<dbReference type="InterPro" id="IPR005215">
    <property type="entry name" value="Trig_fac"/>
</dbReference>
<dbReference type="InterPro" id="IPR008880">
    <property type="entry name" value="Trigger_fac_C"/>
</dbReference>
<dbReference type="InterPro" id="IPR037041">
    <property type="entry name" value="Trigger_fac_C_sf"/>
</dbReference>
<dbReference type="InterPro" id="IPR008881">
    <property type="entry name" value="Trigger_fac_ribosome-bd_bac"/>
</dbReference>
<dbReference type="InterPro" id="IPR036611">
    <property type="entry name" value="Trigger_fac_ribosome-bd_sf"/>
</dbReference>
<dbReference type="InterPro" id="IPR027304">
    <property type="entry name" value="Trigger_fact/SurA_dom_sf"/>
</dbReference>
<dbReference type="NCBIfam" id="TIGR00115">
    <property type="entry name" value="tig"/>
    <property type="match status" value="1"/>
</dbReference>
<dbReference type="PANTHER" id="PTHR30560">
    <property type="entry name" value="TRIGGER FACTOR CHAPERONE AND PEPTIDYL-PROLYL CIS/TRANS ISOMERASE"/>
    <property type="match status" value="1"/>
</dbReference>
<dbReference type="PANTHER" id="PTHR30560:SF3">
    <property type="entry name" value="TRIGGER FACTOR-LIKE PROTEIN TIG, CHLOROPLASTIC"/>
    <property type="match status" value="1"/>
</dbReference>
<dbReference type="Pfam" id="PF00254">
    <property type="entry name" value="FKBP_C"/>
    <property type="match status" value="1"/>
</dbReference>
<dbReference type="Pfam" id="PF05698">
    <property type="entry name" value="Trigger_C"/>
    <property type="match status" value="1"/>
</dbReference>
<dbReference type="Pfam" id="PF05697">
    <property type="entry name" value="Trigger_N"/>
    <property type="match status" value="1"/>
</dbReference>
<dbReference type="PIRSF" id="PIRSF003095">
    <property type="entry name" value="Trigger_factor"/>
    <property type="match status" value="1"/>
</dbReference>
<dbReference type="SUPFAM" id="SSF54534">
    <property type="entry name" value="FKBP-like"/>
    <property type="match status" value="1"/>
</dbReference>
<dbReference type="SUPFAM" id="SSF109998">
    <property type="entry name" value="Triger factor/SurA peptide-binding domain-like"/>
    <property type="match status" value="1"/>
</dbReference>
<dbReference type="SUPFAM" id="SSF102735">
    <property type="entry name" value="Trigger factor ribosome-binding domain"/>
    <property type="match status" value="1"/>
</dbReference>
<dbReference type="PROSITE" id="PS50059">
    <property type="entry name" value="FKBP_PPIASE"/>
    <property type="match status" value="1"/>
</dbReference>
<accession>A2BZ41</accession>
<keyword id="KW-0131">Cell cycle</keyword>
<keyword id="KW-0132">Cell division</keyword>
<keyword id="KW-0143">Chaperone</keyword>
<keyword id="KW-0963">Cytoplasm</keyword>
<keyword id="KW-0413">Isomerase</keyword>
<keyword id="KW-0697">Rotamase</keyword>
<gene>
    <name evidence="1" type="primary">tig</name>
    <name type="ordered locus">P9515_18451</name>
</gene>
<feature type="chain" id="PRO_1000022729" description="Trigger factor">
    <location>
        <begin position="1"/>
        <end position="473"/>
    </location>
</feature>
<feature type="domain" description="PPIase FKBP-type" evidence="1">
    <location>
        <begin position="174"/>
        <end position="261"/>
    </location>
</feature>
<feature type="region of interest" description="Disordered" evidence="2">
    <location>
        <begin position="437"/>
        <end position="473"/>
    </location>
</feature>
<feature type="compositionally biased region" description="Basic and acidic residues" evidence="2">
    <location>
        <begin position="456"/>
        <end position="466"/>
    </location>
</feature>
<organism>
    <name type="scientific">Prochlorococcus marinus (strain MIT 9515)</name>
    <dbReference type="NCBI Taxonomy" id="167542"/>
    <lineage>
        <taxon>Bacteria</taxon>
        <taxon>Bacillati</taxon>
        <taxon>Cyanobacteriota</taxon>
        <taxon>Cyanophyceae</taxon>
        <taxon>Synechococcales</taxon>
        <taxon>Prochlorococcaceae</taxon>
        <taxon>Prochlorococcus</taxon>
    </lineage>
</organism>
<sequence length="473" mass="53559">MIKEALIVKTTALPQSRIALELEIPSNTCKSFVSETINSISRSAKIPGFRLGKIPKQVLIQRIGINQLYASALEKIIDKSWKEAIEMESIEPLSEPELVDGFESLLKNFNPEKTLKINLQTDVAPTLKLKKSKGLSVEIIKRKFDPKSIDEALEKSRNQLANIIPVINRPARLGDIAVVSFKGIYKDSKKAIDGGSSDSMDLELEKNKMIPGFVEGIVGMKIDDNKTLNLKFPDDYSHEESRGKEAIFEVSLKDLKEKELPELNDDFAKQSGNKDSLKELKKDIEKQLKENFDNTQKNIKIEALMDALSKELDAEIPKAMIDIEVRNNIEQTAQRFAQQGMDIKSTFTPELVKTLAESTRPQAEKNVQRNLALKALSESENITVEDKEINQKMKEYDDEISKSQKQIDIQKLKEVVLNDLLKEKLITWLEENSTVKEISEKVTKSTTKSKTKSKTKKESQAKSEPNKKKKEKK</sequence>
<reference key="1">
    <citation type="journal article" date="2007" name="PLoS Genet.">
        <title>Patterns and implications of gene gain and loss in the evolution of Prochlorococcus.</title>
        <authorList>
            <person name="Kettler G.C."/>
            <person name="Martiny A.C."/>
            <person name="Huang K."/>
            <person name="Zucker J."/>
            <person name="Coleman M.L."/>
            <person name="Rodrigue S."/>
            <person name="Chen F."/>
            <person name="Lapidus A."/>
            <person name="Ferriera S."/>
            <person name="Johnson J."/>
            <person name="Steglich C."/>
            <person name="Church G.M."/>
            <person name="Richardson P."/>
            <person name="Chisholm S.W."/>
        </authorList>
    </citation>
    <scope>NUCLEOTIDE SEQUENCE [LARGE SCALE GENOMIC DNA]</scope>
    <source>
        <strain>MIT 9515</strain>
    </source>
</reference>
<comment type="function">
    <text evidence="1">Involved in protein export. Acts as a chaperone by maintaining the newly synthesized protein in an open conformation. Functions as a peptidyl-prolyl cis-trans isomerase.</text>
</comment>
<comment type="catalytic activity">
    <reaction evidence="1">
        <text>[protein]-peptidylproline (omega=180) = [protein]-peptidylproline (omega=0)</text>
        <dbReference type="Rhea" id="RHEA:16237"/>
        <dbReference type="Rhea" id="RHEA-COMP:10747"/>
        <dbReference type="Rhea" id="RHEA-COMP:10748"/>
        <dbReference type="ChEBI" id="CHEBI:83833"/>
        <dbReference type="ChEBI" id="CHEBI:83834"/>
        <dbReference type="EC" id="5.2.1.8"/>
    </reaction>
</comment>
<comment type="subcellular location">
    <subcellularLocation>
        <location>Cytoplasm</location>
    </subcellularLocation>
    <text evidence="1">About half TF is bound to the ribosome near the polypeptide exit tunnel while the other half is free in the cytoplasm.</text>
</comment>
<comment type="domain">
    <text evidence="1">Consists of 3 domains; the N-terminus binds the ribosome, the middle domain has PPIase activity, while the C-terminus has intrinsic chaperone activity on its own.</text>
</comment>
<comment type="similarity">
    <text evidence="1">Belongs to the FKBP-type PPIase family. Tig subfamily.</text>
</comment>
<protein>
    <recommendedName>
        <fullName evidence="1">Trigger factor</fullName>
        <shortName evidence="1">TF</shortName>
        <ecNumber evidence="1">5.2.1.8</ecNumber>
    </recommendedName>
    <alternativeName>
        <fullName evidence="1">PPIase</fullName>
    </alternativeName>
</protein>
<proteinExistence type="inferred from homology"/>